<organism>
    <name type="scientific">Influenza B virus (strain B/GA/1986)</name>
    <dbReference type="NCBI Taxonomy" id="11529"/>
    <lineage>
        <taxon>Viruses</taxon>
        <taxon>Riboviria</taxon>
        <taxon>Orthornavirae</taxon>
        <taxon>Negarnaviricota</taxon>
        <taxon>Polyploviricotina</taxon>
        <taxon>Insthoviricetes</taxon>
        <taxon>Articulavirales</taxon>
        <taxon>Orthomyxoviridae</taxon>
        <taxon>Betainfluenzavirus</taxon>
        <taxon>Betainfluenzavirus influenzae</taxon>
        <taxon>Influenza B virus</taxon>
    </lineage>
</organism>
<evidence type="ECO:0000255" key="1">
    <source>
        <dbReference type="HAMAP-Rule" id="MF_04066"/>
    </source>
</evidence>
<protein>
    <recommendedName>
        <fullName evidence="1">Non-structural protein 1</fullName>
        <shortName evidence="1">NS1</shortName>
    </recommendedName>
    <alternativeName>
        <fullName evidence="1">NS1A</fullName>
    </alternativeName>
</protein>
<comment type="function">
    <text evidence="1">Binds and inhibits the conjugation of the ubiquitin-like G1P2/ISG15 protein to its target proteins. Since G1P2/ISG15 is an early antiviral protein, NS1 may inhibit the host antiviral response. Prevents EIF2AK2/PKR activation, either by binding double strand RNA or by interacting directly with EIF2AK2/PKR. Also binds poly(A) and U6 snRNA.</text>
</comment>
<comment type="subunit">
    <text evidence="1">Homodimer. Interacts with and inhibits human G1P2 conjugation by UBE1L.</text>
</comment>
<comment type="subcellular location">
    <subcellularLocation>
        <location evidence="1">Host cytoplasm</location>
    </subcellularLocation>
    <subcellularLocation>
        <location evidence="1">Host nucleus</location>
    </subcellularLocation>
</comment>
<comment type="alternative products">
    <event type="alternative splicing"/>
    <isoform>
        <id>P12592-1</id>
        <name>NS1</name>
        <sequence type="displayed"/>
    </isoform>
    <isoform>
        <id>P12592-2</id>
        <name>NEP</name>
        <name>NS2</name>
        <sequence type="not described"/>
    </isoform>
</comment>
<comment type="similarity">
    <text evidence="1">Belongs to the influenza B viruses NS1 family.</text>
</comment>
<organismHost>
    <name type="scientific">Homo sapiens</name>
    <name type="common">Human</name>
    <dbReference type="NCBI Taxonomy" id="9606"/>
</organismHost>
<dbReference type="EMBL" id="M19787">
    <property type="protein sequence ID" value="AAA43693.1"/>
    <property type="molecule type" value="Genomic_RNA"/>
</dbReference>
<dbReference type="SMR" id="P12592"/>
<dbReference type="GO" id="GO:0030430">
    <property type="term" value="C:host cell cytoplasm"/>
    <property type="evidence" value="ECO:0007669"/>
    <property type="project" value="UniProtKB-SubCell"/>
</dbReference>
<dbReference type="GO" id="GO:0042025">
    <property type="term" value="C:host cell nucleus"/>
    <property type="evidence" value="ECO:0007669"/>
    <property type="project" value="UniProtKB-SubCell"/>
</dbReference>
<dbReference type="GO" id="GO:0030291">
    <property type="term" value="F:protein serine/threonine kinase inhibitor activity"/>
    <property type="evidence" value="ECO:0007669"/>
    <property type="project" value="UniProtKB-KW"/>
</dbReference>
<dbReference type="GO" id="GO:0003723">
    <property type="term" value="F:RNA binding"/>
    <property type="evidence" value="ECO:0007669"/>
    <property type="project" value="UniProtKB-KW"/>
</dbReference>
<dbReference type="GO" id="GO:0039579">
    <property type="term" value="P:symbiont-mediated suppression of host ISG15-protein conjugation"/>
    <property type="evidence" value="ECO:0007669"/>
    <property type="project" value="UniProtKB-KW"/>
</dbReference>
<dbReference type="GO" id="GO:0039580">
    <property type="term" value="P:symbiont-mediated suppression of host PKR/eIFalpha signaling"/>
    <property type="evidence" value="ECO:0007669"/>
    <property type="project" value="UniProtKB-KW"/>
</dbReference>
<dbReference type="GO" id="GO:0039502">
    <property type="term" value="P:symbiont-mediated suppression of host type I interferon-mediated signaling pathway"/>
    <property type="evidence" value="ECO:0007669"/>
    <property type="project" value="UniProtKB-KW"/>
</dbReference>
<dbReference type="Gene3D" id="1.10.287.10">
    <property type="entry name" value="S15/NS1, RNA-binding"/>
    <property type="match status" value="1"/>
</dbReference>
<dbReference type="HAMAP" id="MF_04066">
    <property type="entry name" value="INFV_NS1"/>
    <property type="match status" value="1"/>
</dbReference>
<dbReference type="InterPro" id="IPR004208">
    <property type="entry name" value="NS1"/>
</dbReference>
<dbReference type="InterPro" id="IPR009068">
    <property type="entry name" value="uS15_NS1_RNA-bd_sf"/>
</dbReference>
<dbReference type="Pfam" id="PF02942">
    <property type="entry name" value="Flu_B_NS1"/>
    <property type="match status" value="1"/>
</dbReference>
<dbReference type="PIRSF" id="PIRSF003938">
    <property type="entry name" value="Flu_B_NS1"/>
    <property type="match status" value="1"/>
</dbReference>
<dbReference type="SUPFAM" id="SSF47060">
    <property type="entry name" value="S15/NS1 RNA-binding domain"/>
    <property type="match status" value="1"/>
</dbReference>
<accession>P12592</accession>
<keyword id="KW-0025">Alternative splicing</keyword>
<keyword id="KW-1035">Host cytoplasm</keyword>
<keyword id="KW-1048">Host nucleus</keyword>
<keyword id="KW-0945">Host-virus interaction</keyword>
<keyword id="KW-1090">Inhibition of host innate immune response by virus</keyword>
<keyword id="KW-1114">Inhibition of host interferon signaling pathway by virus</keyword>
<keyword id="KW-1095">Inhibition of host ISG15 by virus</keyword>
<keyword id="KW-1102">Inhibition of host PKR by virus</keyword>
<keyword id="KW-0922">Interferon antiviral system evasion</keyword>
<keyword id="KW-0694">RNA-binding</keyword>
<keyword id="KW-0899">Viral immunoevasion</keyword>
<proteinExistence type="inferred from homology"/>
<feature type="chain" id="PRO_0000078961" description="Non-structural protein 1">
    <location>
        <begin position="1"/>
        <end position="281"/>
    </location>
</feature>
<feature type="region of interest" description="G1P2-binding">
    <location>
        <begin position="1"/>
        <end position="103"/>
    </location>
</feature>
<feature type="region of interest" description="RNA-binding and homodimerization" evidence="1">
    <location>
        <begin position="1"/>
        <end position="93"/>
    </location>
</feature>
<feature type="short sequence motif" description="Nuclear localization signal" evidence="1">
    <location>
        <begin position="50"/>
        <end position="55"/>
    </location>
</feature>
<reference key="1">
    <citation type="journal article" date="1988" name="Virology">
        <title>Influenza B virus evolution: co-circulating lineages and comparison of evolutionary pattern with those of influenza A and C viruses.</title>
        <authorList>
            <person name="Yamashita M."/>
            <person name="Krystal M."/>
            <person name="Fitch W.M."/>
            <person name="Palese P."/>
        </authorList>
    </citation>
    <scope>NUCLEOTIDE SEQUENCE [GENOMIC RNA]</scope>
</reference>
<reference key="2">
    <citation type="journal article" date="2003" name="Virology">
        <title>Intracellular warfare between human influenza viruses and human cells: the roles of the viral NS1 protein.</title>
        <authorList>
            <person name="Krug R.M."/>
            <person name="Yuan W."/>
            <person name="Noah D.L."/>
            <person name="Latham A.G."/>
        </authorList>
    </citation>
    <scope>REVIEW</scope>
</reference>
<gene>
    <name evidence="1" type="primary">NS</name>
</gene>
<name>NS1_INBGA</name>
<sequence length="281" mass="31867">MADNMTTTQIEVGPGATNATINFEAGILECYERLSWQRALDYPGQDRLNRLKRKLESRIKTHNKSEPESKRMSLEERKAIGIKMMKVLLFMNPSAGVEGFEPDCMKNPSNSNCPNCNWADYPPTPGKYLDDIEEVPENVDDPTEIVLRDMNNKDARQKIKEEVNTQKEGKFRLTIKRDIRNVLSLRVLVNGTFLKHPNGDKSLSTLHRLNAYDQSGRLVAKLVATDDLTVEDEEDGHRILNSLFERFNEGHSKPIRAAETAVGVLSQFGQEHRLSPEEGDN</sequence>